<sequence>MGMKKDLLLVLTIESVVLGVVLGFVIRPFNPSNDTISLIGFPGEIFMQIVEMMILPLIMSSVISALAQVRARDARRIGIVTIIYYMITTFLATFTGIILVSSIHPGDPELIHELGEGTLENTALSTLDTFLDQIRNMFPENIIQATFQQVQTEYMPIKPSRVRNATSMNMTSEVLHKQTLTYTNEMNVLGLIVFCSGFGIILSILGDQARLMINFFIVLDAIIMRWISALMWCYPIGILSLVCKNIIDIDNLTETAQALAMYVVTVICGLMIHSLLTLPLLYFLVTKKSPFAFMTGMLQALATAFGTASSGATLPVTFRALEENLKIDRRVTRFVLPLGATITMDGTALYEAVAVIFIAQLHNIKLSLMDLVTISITTTVASIGSGSVPAGLDTIVIVLTTVGLPAKDLSLLLTVDWLLDRIRTSVNVLGDSFGAGIIHHLTRSSLLEADTDELIRQIREDIDILNNPHQDTLPISHHSVQSTIQNTQNAMQAPHVYSKSARASFAPIPNEEERKALLKESIALNKSDTHIV</sequence>
<gene>
    <name type="primary">glt-3</name>
    <name type="ORF">K08F4.4</name>
</gene>
<comment type="subcellular location">
    <subcellularLocation>
        <location evidence="1">Membrane</location>
        <topology evidence="1">Multi-pass membrane protein</topology>
    </subcellularLocation>
</comment>
<comment type="similarity">
    <text evidence="4">Belongs to the dicarboxylate/amino acid:cation symporter (DAACS) (TC 2.A.23) family.</text>
</comment>
<evidence type="ECO:0000250" key="1"/>
<evidence type="ECO:0000255" key="2"/>
<evidence type="ECO:0000269" key="3">
    <source>
    </source>
</evidence>
<evidence type="ECO:0000305" key="4"/>
<protein>
    <recommendedName>
        <fullName>Putative sodium-dependent excitatory amino acid transporter glt-3</fullName>
    </recommendedName>
</protein>
<proteinExistence type="evidence at protein level"/>
<accession>Q21353</accession>
<reference key="1">
    <citation type="journal article" date="1998" name="Science">
        <title>Genome sequence of the nematode C. elegans: a platform for investigating biology.</title>
        <authorList>
            <consortium name="The C. elegans sequencing consortium"/>
        </authorList>
    </citation>
    <scope>NUCLEOTIDE SEQUENCE [LARGE SCALE GENOMIC DNA]</scope>
    <source>
        <strain>Bristol N2</strain>
    </source>
</reference>
<reference key="2">
    <citation type="journal article" date="2007" name="Mol. Cell. Proteomics">
        <title>Proteomics reveals N-linked glycoprotein diversity in Caenorhabditis elegans and suggests an atypical translocation mechanism for integral membrane proteins.</title>
        <authorList>
            <person name="Kaji H."/>
            <person name="Kamiie J."/>
            <person name="Kawakami H."/>
            <person name="Kido K."/>
            <person name="Yamauchi Y."/>
            <person name="Shinkawa T."/>
            <person name="Taoka M."/>
            <person name="Takahashi N."/>
            <person name="Isobe T."/>
        </authorList>
    </citation>
    <scope>GLYCOSYLATION [LARGE SCALE ANALYSIS] AT ASN-164 AND ASN-169</scope>
    <scope>IDENTIFICATION BY MASS SPECTROMETRY</scope>
    <source>
        <strain>Bristol N2</strain>
    </source>
</reference>
<name>EAA3_CAEEL</name>
<keyword id="KW-0325">Glycoprotein</keyword>
<keyword id="KW-0472">Membrane</keyword>
<keyword id="KW-1185">Reference proteome</keyword>
<keyword id="KW-0769">Symport</keyword>
<keyword id="KW-0812">Transmembrane</keyword>
<keyword id="KW-1133">Transmembrane helix</keyword>
<keyword id="KW-0813">Transport</keyword>
<feature type="chain" id="PRO_0000202075" description="Putative sodium-dependent excitatory amino acid transporter glt-3">
    <location>
        <begin position="1"/>
        <end position="532"/>
    </location>
</feature>
<feature type="topological domain" description="Cytoplasmic" evidence="2">
    <location>
        <begin position="1"/>
        <end position="5"/>
    </location>
</feature>
<feature type="transmembrane region" description="Helical" evidence="2">
    <location>
        <begin position="6"/>
        <end position="26"/>
    </location>
</feature>
<feature type="transmembrane region" description="Helical" evidence="2">
    <location>
        <begin position="46"/>
        <end position="66"/>
    </location>
</feature>
<feature type="transmembrane region" description="Helical" evidence="2">
    <location>
        <begin position="83"/>
        <end position="103"/>
    </location>
</feature>
<feature type="topological domain" description="Extracellular" evidence="2">
    <location>
        <begin position="104"/>
        <end position="181"/>
    </location>
</feature>
<feature type="transmembrane region" description="Helical" evidence="2">
    <location>
        <begin position="182"/>
        <end position="202"/>
    </location>
</feature>
<feature type="transmembrane region" description="Helical" evidence="2">
    <location>
        <begin position="222"/>
        <end position="242"/>
    </location>
</feature>
<feature type="transmembrane region" description="Helical" evidence="2">
    <location>
        <begin position="264"/>
        <end position="284"/>
    </location>
</feature>
<feature type="transmembrane region" description="Helical" evidence="2">
    <location>
        <begin position="352"/>
        <end position="372"/>
    </location>
</feature>
<feature type="transmembrane region" description="Helical" evidence="2">
    <location>
        <begin position="383"/>
        <end position="402"/>
    </location>
</feature>
<feature type="glycosylation site" description="N-linked (GlcNAc...) asparagine" evidence="3">
    <location>
        <position position="164"/>
    </location>
</feature>
<feature type="glycosylation site" description="N-linked (GlcNAc...) asparagine" evidence="3">
    <location>
        <position position="169"/>
    </location>
</feature>
<dbReference type="EMBL" id="Z68879">
    <property type="protein sequence ID" value="CAA93084.1"/>
    <property type="molecule type" value="Genomic_DNA"/>
</dbReference>
<dbReference type="PIR" id="T23481">
    <property type="entry name" value="T23481"/>
</dbReference>
<dbReference type="RefSeq" id="NP_501844.1">
    <property type="nucleotide sequence ID" value="NM_069443.6"/>
</dbReference>
<dbReference type="SMR" id="Q21353"/>
<dbReference type="BioGRID" id="42985">
    <property type="interactions" value="2"/>
</dbReference>
<dbReference type="DIP" id="DIP-27068N"/>
<dbReference type="FunCoup" id="Q21353">
    <property type="interactions" value="112"/>
</dbReference>
<dbReference type="STRING" id="6239.K08F4.4.1"/>
<dbReference type="TCDB" id="2.A.23.2.9">
    <property type="family name" value="the dicarboxylate/amino acid:cation (na(+) or h(+)) symporter (daacs) family"/>
</dbReference>
<dbReference type="GlyCosmos" id="Q21353">
    <property type="glycosylation" value="2 sites, No reported glycans"/>
</dbReference>
<dbReference type="iPTMnet" id="Q21353"/>
<dbReference type="PaxDb" id="6239-K08F4.4"/>
<dbReference type="PeptideAtlas" id="Q21353"/>
<dbReference type="EnsemblMetazoa" id="K08F4.4.1">
    <property type="protein sequence ID" value="K08F4.4.1"/>
    <property type="gene ID" value="WBGene00001621"/>
</dbReference>
<dbReference type="GeneID" id="177882"/>
<dbReference type="KEGG" id="cel:CELE_K08F4.4"/>
<dbReference type="UCSC" id="K08F4.4">
    <property type="organism name" value="c. elegans"/>
</dbReference>
<dbReference type="AGR" id="WB:WBGene00001621"/>
<dbReference type="CTD" id="177882"/>
<dbReference type="WormBase" id="K08F4.4">
    <property type="protein sequence ID" value="CE06152"/>
    <property type="gene ID" value="WBGene00001621"/>
    <property type="gene designation" value="glt-3"/>
</dbReference>
<dbReference type="eggNOG" id="KOG3787">
    <property type="taxonomic scope" value="Eukaryota"/>
</dbReference>
<dbReference type="HOGENOM" id="CLU_019375_3_2_1"/>
<dbReference type="InParanoid" id="Q21353"/>
<dbReference type="OMA" id="AIIMRWI"/>
<dbReference type="OrthoDB" id="5877963at2759"/>
<dbReference type="PhylomeDB" id="Q21353"/>
<dbReference type="Reactome" id="R-CEL-210455">
    <property type="pathway name" value="Astrocytic Glutamate-Glutamine Uptake And Metabolism"/>
</dbReference>
<dbReference type="Reactome" id="R-CEL-210500">
    <property type="pathway name" value="Glutamate Neurotransmitter Release Cycle"/>
</dbReference>
<dbReference type="Reactome" id="R-CEL-352230">
    <property type="pathway name" value="Amino acid transport across the plasma membrane"/>
</dbReference>
<dbReference type="Reactome" id="R-CEL-425393">
    <property type="pathway name" value="Transport of inorganic cations/anions and amino acids/oligopeptides"/>
</dbReference>
<dbReference type="Reactome" id="R-CEL-9013149">
    <property type="pathway name" value="RAC1 GTPase cycle"/>
</dbReference>
<dbReference type="Reactome" id="R-CEL-9013406">
    <property type="pathway name" value="RHOQ GTPase cycle"/>
</dbReference>
<dbReference type="Reactome" id="R-CEL-9013407">
    <property type="pathway name" value="RHOH GTPase cycle"/>
</dbReference>
<dbReference type="Reactome" id="R-CEL-9013423">
    <property type="pathway name" value="RAC3 GTPase cycle"/>
</dbReference>
<dbReference type="PRO" id="PR:Q21353"/>
<dbReference type="Proteomes" id="UP000001940">
    <property type="component" value="Chromosome IV"/>
</dbReference>
<dbReference type="Bgee" id="WBGene00001621">
    <property type="expression patterns" value="Expressed in larva and 2 other cell types or tissues"/>
</dbReference>
<dbReference type="GO" id="GO:0005886">
    <property type="term" value="C:plasma membrane"/>
    <property type="evidence" value="ECO:0000318"/>
    <property type="project" value="GO_Central"/>
</dbReference>
<dbReference type="GO" id="GO:0015501">
    <property type="term" value="F:glutamate:sodium symporter activity"/>
    <property type="evidence" value="ECO:0000318"/>
    <property type="project" value="GO_Central"/>
</dbReference>
<dbReference type="GO" id="GO:0005313">
    <property type="term" value="F:L-glutamate transmembrane transporter activity"/>
    <property type="evidence" value="ECO:0000318"/>
    <property type="project" value="GO_Central"/>
</dbReference>
<dbReference type="GO" id="GO:0015175">
    <property type="term" value="F:neutral L-amino acid transmembrane transporter activity"/>
    <property type="evidence" value="ECO:0000318"/>
    <property type="project" value="GO_Central"/>
</dbReference>
<dbReference type="GO" id="GO:0015813">
    <property type="term" value="P:L-glutamate transmembrane transport"/>
    <property type="evidence" value="ECO:0000318"/>
    <property type="project" value="GO_Central"/>
</dbReference>
<dbReference type="Gene3D" id="1.10.3860.10">
    <property type="entry name" value="Sodium:dicarboxylate symporter"/>
    <property type="match status" value="1"/>
</dbReference>
<dbReference type="InterPro" id="IPR050746">
    <property type="entry name" value="DAACS"/>
</dbReference>
<dbReference type="InterPro" id="IPR001991">
    <property type="entry name" value="Na-dicarboxylate_symporter"/>
</dbReference>
<dbReference type="InterPro" id="IPR018107">
    <property type="entry name" value="Na-dicarboxylate_symporter_CS"/>
</dbReference>
<dbReference type="InterPro" id="IPR036458">
    <property type="entry name" value="Na:dicarbo_symporter_sf"/>
</dbReference>
<dbReference type="PANTHER" id="PTHR11958:SF46">
    <property type="entry name" value="SODIUM-DEPENDENT EXCITATORY AMINO ACID TRANSPORTER GLT-3-RELATED"/>
    <property type="match status" value="1"/>
</dbReference>
<dbReference type="PANTHER" id="PTHR11958">
    <property type="entry name" value="SODIUM/DICARBOXYLATE SYMPORTER-RELATED"/>
    <property type="match status" value="1"/>
</dbReference>
<dbReference type="Pfam" id="PF00375">
    <property type="entry name" value="SDF"/>
    <property type="match status" value="1"/>
</dbReference>
<dbReference type="PRINTS" id="PR00173">
    <property type="entry name" value="EDTRNSPORT"/>
</dbReference>
<dbReference type="SUPFAM" id="SSF118215">
    <property type="entry name" value="Proton glutamate symport protein"/>
    <property type="match status" value="1"/>
</dbReference>
<dbReference type="PROSITE" id="PS00713">
    <property type="entry name" value="NA_DICARBOXYL_SYMP_1"/>
    <property type="match status" value="1"/>
</dbReference>
<dbReference type="PROSITE" id="PS00714">
    <property type="entry name" value="NA_DICARBOXYL_SYMP_2"/>
    <property type="match status" value="1"/>
</dbReference>
<organism>
    <name type="scientific">Caenorhabditis elegans</name>
    <dbReference type="NCBI Taxonomy" id="6239"/>
    <lineage>
        <taxon>Eukaryota</taxon>
        <taxon>Metazoa</taxon>
        <taxon>Ecdysozoa</taxon>
        <taxon>Nematoda</taxon>
        <taxon>Chromadorea</taxon>
        <taxon>Rhabditida</taxon>
        <taxon>Rhabditina</taxon>
        <taxon>Rhabditomorpha</taxon>
        <taxon>Rhabditoidea</taxon>
        <taxon>Rhabditidae</taxon>
        <taxon>Peloderinae</taxon>
        <taxon>Caenorhabditis</taxon>
    </lineage>
</organism>